<feature type="chain" id="PRO_1000136100" description="Glycerol-3-phosphate acyltransferase">
    <location>
        <begin position="1"/>
        <end position="202"/>
    </location>
</feature>
<feature type="transmembrane region" description="Helical" evidence="1">
    <location>
        <begin position="11"/>
        <end position="31"/>
    </location>
</feature>
<feature type="transmembrane region" description="Helical" evidence="1">
    <location>
        <begin position="87"/>
        <end position="107"/>
    </location>
</feature>
<feature type="transmembrane region" description="Helical" evidence="1">
    <location>
        <begin position="116"/>
        <end position="136"/>
    </location>
</feature>
<feature type="transmembrane region" description="Helical" evidence="1">
    <location>
        <begin position="158"/>
        <end position="178"/>
    </location>
</feature>
<reference key="1">
    <citation type="submission" date="2008-04" db="EMBL/GenBank/DDBJ databases">
        <title>Complete sequence of chromosome of Methylobacterium populi BJ001.</title>
        <authorList>
            <consortium name="US DOE Joint Genome Institute"/>
            <person name="Copeland A."/>
            <person name="Lucas S."/>
            <person name="Lapidus A."/>
            <person name="Glavina del Rio T."/>
            <person name="Dalin E."/>
            <person name="Tice H."/>
            <person name="Bruce D."/>
            <person name="Goodwin L."/>
            <person name="Pitluck S."/>
            <person name="Chertkov O."/>
            <person name="Brettin T."/>
            <person name="Detter J.C."/>
            <person name="Han C."/>
            <person name="Kuske C.R."/>
            <person name="Schmutz J."/>
            <person name="Larimer F."/>
            <person name="Land M."/>
            <person name="Hauser L."/>
            <person name="Kyrpides N."/>
            <person name="Mikhailova N."/>
            <person name="Marx C."/>
            <person name="Richardson P."/>
        </authorList>
    </citation>
    <scope>NUCLEOTIDE SEQUENCE [LARGE SCALE GENOMIC DNA]</scope>
    <source>
        <strain>ATCC BAA-705 / NCIMB 13946 / BJ001</strain>
    </source>
</reference>
<proteinExistence type="inferred from homology"/>
<sequence length="202" mass="20250">MTPLLAAGWPALIAALVLGYACGAIPFGLILTKVAGLGDVRTIGSGNIGATNVLRTGRKGLAAATLLCDALKGTLPVLAAGQWGEGPALAAGLGAFLGHLFPVWLGFKGGKGVATFIGVLLALSPLTLAAFAAIWLGLAFALKYSSLAALAASAATPVILWALGHGGVAALFLVLAALLWWKHAPNIRRLAAGTEGRIGQKG</sequence>
<organism>
    <name type="scientific">Methylorubrum populi (strain ATCC BAA-705 / NCIMB 13946 / BJ001)</name>
    <name type="common">Methylobacterium populi</name>
    <dbReference type="NCBI Taxonomy" id="441620"/>
    <lineage>
        <taxon>Bacteria</taxon>
        <taxon>Pseudomonadati</taxon>
        <taxon>Pseudomonadota</taxon>
        <taxon>Alphaproteobacteria</taxon>
        <taxon>Hyphomicrobiales</taxon>
        <taxon>Methylobacteriaceae</taxon>
        <taxon>Methylorubrum</taxon>
    </lineage>
</organism>
<protein>
    <recommendedName>
        <fullName evidence="1">Glycerol-3-phosphate acyltransferase</fullName>
    </recommendedName>
    <alternativeName>
        <fullName evidence="1">Acyl-PO4 G3P acyltransferase</fullName>
    </alternativeName>
    <alternativeName>
        <fullName evidence="1">Acyl-phosphate--glycerol-3-phosphate acyltransferase</fullName>
    </alternativeName>
    <alternativeName>
        <fullName evidence="1">G3P acyltransferase</fullName>
        <shortName evidence="1">GPAT</shortName>
        <ecNumber evidence="1">2.3.1.275</ecNumber>
    </alternativeName>
    <alternativeName>
        <fullName evidence="1">Lysophosphatidic acid synthase</fullName>
        <shortName evidence="1">LPA synthase</shortName>
    </alternativeName>
</protein>
<comment type="function">
    <text evidence="1">Catalyzes the transfer of an acyl group from acyl-phosphate (acyl-PO(4)) to glycerol-3-phosphate (G3P) to form lysophosphatidic acid (LPA). This enzyme utilizes acyl-phosphate as fatty acyl donor, but not acyl-CoA or acyl-ACP.</text>
</comment>
<comment type="catalytic activity">
    <reaction evidence="1">
        <text>an acyl phosphate + sn-glycerol 3-phosphate = a 1-acyl-sn-glycero-3-phosphate + phosphate</text>
        <dbReference type="Rhea" id="RHEA:34075"/>
        <dbReference type="ChEBI" id="CHEBI:43474"/>
        <dbReference type="ChEBI" id="CHEBI:57597"/>
        <dbReference type="ChEBI" id="CHEBI:57970"/>
        <dbReference type="ChEBI" id="CHEBI:59918"/>
        <dbReference type="EC" id="2.3.1.275"/>
    </reaction>
</comment>
<comment type="pathway">
    <text evidence="1">Lipid metabolism; phospholipid metabolism.</text>
</comment>
<comment type="subunit">
    <text evidence="1">Probably interacts with PlsX.</text>
</comment>
<comment type="subcellular location">
    <subcellularLocation>
        <location evidence="1">Cell inner membrane</location>
        <topology evidence="1">Multi-pass membrane protein</topology>
    </subcellularLocation>
</comment>
<comment type="similarity">
    <text evidence="1">Belongs to the PlsY family.</text>
</comment>
<keyword id="KW-0997">Cell inner membrane</keyword>
<keyword id="KW-1003">Cell membrane</keyword>
<keyword id="KW-0444">Lipid biosynthesis</keyword>
<keyword id="KW-0443">Lipid metabolism</keyword>
<keyword id="KW-0472">Membrane</keyword>
<keyword id="KW-0594">Phospholipid biosynthesis</keyword>
<keyword id="KW-1208">Phospholipid metabolism</keyword>
<keyword id="KW-0808">Transferase</keyword>
<keyword id="KW-0812">Transmembrane</keyword>
<keyword id="KW-1133">Transmembrane helix</keyword>
<name>PLSY_METPB</name>
<accession>B1ZLL2</accession>
<gene>
    <name evidence="1" type="primary">plsY</name>
    <name type="ordered locus">Mpop_3514</name>
</gene>
<evidence type="ECO:0000255" key="1">
    <source>
        <dbReference type="HAMAP-Rule" id="MF_01043"/>
    </source>
</evidence>
<dbReference type="EC" id="2.3.1.275" evidence="1"/>
<dbReference type="EMBL" id="CP001029">
    <property type="protein sequence ID" value="ACB81664.1"/>
    <property type="molecule type" value="Genomic_DNA"/>
</dbReference>
<dbReference type="RefSeq" id="WP_012455380.1">
    <property type="nucleotide sequence ID" value="NC_010725.1"/>
</dbReference>
<dbReference type="SMR" id="B1ZLL2"/>
<dbReference type="STRING" id="441620.Mpop_3514"/>
<dbReference type="KEGG" id="mpo:Mpop_3514"/>
<dbReference type="eggNOG" id="COG0344">
    <property type="taxonomic scope" value="Bacteria"/>
</dbReference>
<dbReference type="HOGENOM" id="CLU_081254_1_0_5"/>
<dbReference type="OrthoDB" id="9777124at2"/>
<dbReference type="UniPathway" id="UPA00085"/>
<dbReference type="Proteomes" id="UP000007136">
    <property type="component" value="Chromosome"/>
</dbReference>
<dbReference type="GO" id="GO:0005886">
    <property type="term" value="C:plasma membrane"/>
    <property type="evidence" value="ECO:0007669"/>
    <property type="project" value="UniProtKB-SubCell"/>
</dbReference>
<dbReference type="GO" id="GO:0043772">
    <property type="term" value="F:acyl-phosphate glycerol-3-phosphate acyltransferase activity"/>
    <property type="evidence" value="ECO:0007669"/>
    <property type="project" value="UniProtKB-UniRule"/>
</dbReference>
<dbReference type="GO" id="GO:0008654">
    <property type="term" value="P:phospholipid biosynthetic process"/>
    <property type="evidence" value="ECO:0007669"/>
    <property type="project" value="UniProtKB-UniRule"/>
</dbReference>
<dbReference type="HAMAP" id="MF_01043">
    <property type="entry name" value="PlsY"/>
    <property type="match status" value="1"/>
</dbReference>
<dbReference type="InterPro" id="IPR003811">
    <property type="entry name" value="G3P_acylTferase_PlsY"/>
</dbReference>
<dbReference type="NCBIfam" id="TIGR00023">
    <property type="entry name" value="glycerol-3-phosphate 1-O-acyltransferase PlsY"/>
    <property type="match status" value="1"/>
</dbReference>
<dbReference type="PANTHER" id="PTHR30309:SF0">
    <property type="entry name" value="GLYCEROL-3-PHOSPHATE ACYLTRANSFERASE-RELATED"/>
    <property type="match status" value="1"/>
</dbReference>
<dbReference type="PANTHER" id="PTHR30309">
    <property type="entry name" value="INNER MEMBRANE PROTEIN YGIH"/>
    <property type="match status" value="1"/>
</dbReference>
<dbReference type="Pfam" id="PF02660">
    <property type="entry name" value="G3P_acyltransf"/>
    <property type="match status" value="1"/>
</dbReference>
<dbReference type="SMART" id="SM01207">
    <property type="entry name" value="G3P_acyltransf"/>
    <property type="match status" value="1"/>
</dbReference>